<proteinExistence type="inferred from homology"/>
<dbReference type="EC" id="6.3.5.-" evidence="1"/>
<dbReference type="EMBL" id="AM920428">
    <property type="protein sequence ID" value="CAP92041.1"/>
    <property type="molecule type" value="Genomic_DNA"/>
</dbReference>
<dbReference type="RefSeq" id="XP_002559395.1">
    <property type="nucleotide sequence ID" value="XM_002559349.1"/>
</dbReference>
<dbReference type="SMR" id="B6H4I3"/>
<dbReference type="STRING" id="500485.B6H4I3"/>
<dbReference type="GeneID" id="8303903"/>
<dbReference type="KEGG" id="pcs:N7525_003207"/>
<dbReference type="VEuPathDB" id="FungiDB:PCH_Pc13g09720"/>
<dbReference type="eggNOG" id="KOG2438">
    <property type="taxonomic scope" value="Eukaryota"/>
</dbReference>
<dbReference type="HOGENOM" id="CLU_019240_4_1_1"/>
<dbReference type="OMA" id="ARKWWMG"/>
<dbReference type="OrthoDB" id="1722066at2759"/>
<dbReference type="BioCyc" id="PCHR:PC13G09720-MONOMER"/>
<dbReference type="Proteomes" id="UP000000724">
    <property type="component" value="Contig Pc00c13"/>
</dbReference>
<dbReference type="GO" id="GO:0030956">
    <property type="term" value="C:glutamyl-tRNA(Gln) amidotransferase complex"/>
    <property type="evidence" value="ECO:0007669"/>
    <property type="project" value="UniProtKB-UniRule"/>
</dbReference>
<dbReference type="GO" id="GO:0005739">
    <property type="term" value="C:mitochondrion"/>
    <property type="evidence" value="ECO:0007669"/>
    <property type="project" value="UniProtKB-SubCell"/>
</dbReference>
<dbReference type="GO" id="GO:0005524">
    <property type="term" value="F:ATP binding"/>
    <property type="evidence" value="ECO:0007669"/>
    <property type="project" value="UniProtKB-KW"/>
</dbReference>
<dbReference type="GO" id="GO:0050567">
    <property type="term" value="F:glutaminyl-tRNA synthase (glutamine-hydrolyzing) activity"/>
    <property type="evidence" value="ECO:0007669"/>
    <property type="project" value="UniProtKB-UniRule"/>
</dbReference>
<dbReference type="GO" id="GO:0070681">
    <property type="term" value="P:glutaminyl-tRNAGln biosynthesis via transamidation"/>
    <property type="evidence" value="ECO:0007669"/>
    <property type="project" value="UniProtKB-UniRule"/>
</dbReference>
<dbReference type="GO" id="GO:0032543">
    <property type="term" value="P:mitochondrial translation"/>
    <property type="evidence" value="ECO:0007669"/>
    <property type="project" value="UniProtKB-UniRule"/>
</dbReference>
<dbReference type="Gene3D" id="1.10.10.410">
    <property type="match status" value="1"/>
</dbReference>
<dbReference type="HAMAP" id="MF_00121">
    <property type="entry name" value="GatB"/>
    <property type="match status" value="1"/>
</dbReference>
<dbReference type="InterPro" id="IPR017959">
    <property type="entry name" value="Asn/Gln-tRNA_amidoTrfase_suB/E"/>
</dbReference>
<dbReference type="InterPro" id="IPR006075">
    <property type="entry name" value="Asn/Gln-tRNA_Trfase_suB/E_cat"/>
</dbReference>
<dbReference type="InterPro" id="IPR018027">
    <property type="entry name" value="Asn/Gln_amidotransferase"/>
</dbReference>
<dbReference type="InterPro" id="IPR003789">
    <property type="entry name" value="Asn/Gln_tRNA_amidoTrase-B-like"/>
</dbReference>
<dbReference type="InterPro" id="IPR004413">
    <property type="entry name" value="GatB"/>
</dbReference>
<dbReference type="InterPro" id="IPR023168">
    <property type="entry name" value="GatB_Yqey_C_2"/>
</dbReference>
<dbReference type="InterPro" id="IPR017958">
    <property type="entry name" value="Gln-tRNA_amidoTrfase_suB_CS"/>
</dbReference>
<dbReference type="InterPro" id="IPR014746">
    <property type="entry name" value="Gln_synth/guanido_kin_cat_dom"/>
</dbReference>
<dbReference type="NCBIfam" id="TIGR00133">
    <property type="entry name" value="gatB"/>
    <property type="match status" value="1"/>
</dbReference>
<dbReference type="NCBIfam" id="NF004012">
    <property type="entry name" value="PRK05477.1-2"/>
    <property type="match status" value="1"/>
</dbReference>
<dbReference type="PANTHER" id="PTHR11659">
    <property type="entry name" value="GLUTAMYL-TRNA GLN AMIDOTRANSFERASE SUBUNIT B MITOCHONDRIAL AND PROKARYOTIC PET112-RELATED"/>
    <property type="match status" value="1"/>
</dbReference>
<dbReference type="PANTHER" id="PTHR11659:SF0">
    <property type="entry name" value="GLUTAMYL-TRNA(GLN) AMIDOTRANSFERASE SUBUNIT B, MITOCHONDRIAL"/>
    <property type="match status" value="1"/>
</dbReference>
<dbReference type="Pfam" id="PF02934">
    <property type="entry name" value="GatB_N"/>
    <property type="match status" value="1"/>
</dbReference>
<dbReference type="Pfam" id="PF02637">
    <property type="entry name" value="GatB_Yqey"/>
    <property type="match status" value="1"/>
</dbReference>
<dbReference type="SMART" id="SM00845">
    <property type="entry name" value="GatB_Yqey"/>
    <property type="match status" value="1"/>
</dbReference>
<dbReference type="SUPFAM" id="SSF89095">
    <property type="entry name" value="GatB/YqeY motif"/>
    <property type="match status" value="1"/>
</dbReference>
<dbReference type="SUPFAM" id="SSF55931">
    <property type="entry name" value="Glutamine synthetase/guanido kinase"/>
    <property type="match status" value="1"/>
</dbReference>
<dbReference type="PROSITE" id="PS01234">
    <property type="entry name" value="GATB"/>
    <property type="match status" value="1"/>
</dbReference>
<comment type="function">
    <text evidence="1">Allows the formation of correctly charged Gln-tRNA(Gln) through the transamidation of misacylated Glu-tRNA(Gln) in the mitochondria. The reaction takes place in the presence of glutamine and ATP through an activated gamma-phospho-Glu-tRNA(Gln).</text>
</comment>
<comment type="catalytic activity">
    <reaction evidence="1">
        <text>L-glutamyl-tRNA(Gln) + L-glutamine + ATP + H2O = L-glutaminyl-tRNA(Gln) + L-glutamate + ADP + phosphate + H(+)</text>
        <dbReference type="Rhea" id="RHEA:17521"/>
        <dbReference type="Rhea" id="RHEA-COMP:9681"/>
        <dbReference type="Rhea" id="RHEA-COMP:9684"/>
        <dbReference type="ChEBI" id="CHEBI:15377"/>
        <dbReference type="ChEBI" id="CHEBI:15378"/>
        <dbReference type="ChEBI" id="CHEBI:29985"/>
        <dbReference type="ChEBI" id="CHEBI:30616"/>
        <dbReference type="ChEBI" id="CHEBI:43474"/>
        <dbReference type="ChEBI" id="CHEBI:58359"/>
        <dbReference type="ChEBI" id="CHEBI:78520"/>
        <dbReference type="ChEBI" id="CHEBI:78521"/>
        <dbReference type="ChEBI" id="CHEBI:456216"/>
    </reaction>
</comment>
<comment type="subunit">
    <text evidence="1">Subunit of the heterotrimeric GatCAB amidotransferase (AdT) complex, composed of A, B and C subunits.</text>
</comment>
<comment type="subcellular location">
    <subcellularLocation>
        <location evidence="1">Mitochondrion</location>
    </subcellularLocation>
</comment>
<comment type="similarity">
    <text evidence="1">Belongs to the GatB/GatE family. GatB subfamily.</text>
</comment>
<keyword id="KW-0067">ATP-binding</keyword>
<keyword id="KW-0436">Ligase</keyword>
<keyword id="KW-0496">Mitochondrion</keyword>
<keyword id="KW-0547">Nucleotide-binding</keyword>
<keyword id="KW-0648">Protein biosynthesis</keyword>
<keyword id="KW-1185">Reference proteome</keyword>
<keyword id="KW-0809">Transit peptide</keyword>
<feature type="transit peptide" description="Mitochondrion" evidence="1">
    <location>
        <begin position="1"/>
        <end position="109"/>
    </location>
</feature>
<feature type="chain" id="PRO_0000413269" description="Glutamyl-tRNA(Gln) amidotransferase subunit B, mitochondrial">
    <location>
        <begin position="110"/>
        <end position="588"/>
    </location>
</feature>
<feature type="region of interest" description="Disordered" evidence="2">
    <location>
        <begin position="22"/>
        <end position="50"/>
    </location>
</feature>
<feature type="compositionally biased region" description="Low complexity" evidence="2">
    <location>
        <begin position="22"/>
        <end position="35"/>
    </location>
</feature>
<name>GATB_PENRW</name>
<protein>
    <recommendedName>
        <fullName evidence="1">Glutamyl-tRNA(Gln) amidotransferase subunit B, mitochondrial</fullName>
        <shortName evidence="1">Glu-AdT subunit B</shortName>
        <ecNumber evidence="1">6.3.5.-</ecNumber>
    </recommendedName>
</protein>
<evidence type="ECO:0000255" key="1">
    <source>
        <dbReference type="HAMAP-Rule" id="MF_03147"/>
    </source>
</evidence>
<evidence type="ECO:0000256" key="2">
    <source>
        <dbReference type="SAM" id="MobiDB-lite"/>
    </source>
</evidence>
<organism>
    <name type="scientific">Penicillium rubens (strain ATCC 28089 / DSM 1075 / NRRL 1951 / Wisconsin 54-1255)</name>
    <name type="common">Penicillium chrysogenum</name>
    <dbReference type="NCBI Taxonomy" id="500485"/>
    <lineage>
        <taxon>Eukaryota</taxon>
        <taxon>Fungi</taxon>
        <taxon>Dikarya</taxon>
        <taxon>Ascomycota</taxon>
        <taxon>Pezizomycotina</taxon>
        <taxon>Eurotiomycetes</taxon>
        <taxon>Eurotiomycetidae</taxon>
        <taxon>Eurotiales</taxon>
        <taxon>Aspergillaceae</taxon>
        <taxon>Penicillium</taxon>
        <taxon>Penicillium chrysogenum species complex</taxon>
    </lineage>
</organism>
<gene>
    <name type="ORF">Pc13g09720</name>
</gene>
<sequence>MLRSWIGSGTLRSLCARRLTRSSLPSPKASFSSAPNRYLQPPTSADRVPLRKQLKQEAKALRSHKKQRKETEEASRQEWELTVGVEIHAQLDTEAKLFSRAPTSTSETPNSNVALFDLAFPGSQPEFQIATLLPALRAAIALNCEIQPVSRFDRKHYFYQDQPAGYQITQYYEPFARNGYVDLFDYDGIAPEDGERVRIDIKQLQLEQDTAKSQEYPPSTQLLDFNRVSHPLIEIITMPQIHTPATAAACVRKLQAIVQSCGAVTTGMEMGGLRADVNVSVRRRGEAAGQHQYDGITGLGQRTEIKNLSSFKAVEDAIIAEKNRQIEVLESGGVIEGETRGWAIGSTETRRLRGKEGSVDYRYMPDPDIPPLIIGEDLLSRLRESLPTAPDALLTLLVGSEFNLPIEDAKPLIELDDGARLEYYHDVVDILRSLQVDRDDKTRAGLARVASNWVLHELGGLLTKADQAWDAEVVPTRSLAHLIDHLQRKLITGPTAKQVLATIFDGDHRPVPQLLEEENLLLRPLSREEYIALAESVIALNPQMVEQIRSKNQLGKLGWFVGQMMRTGEKGRVEAPKAEEILRELILG</sequence>
<accession>B6H4I3</accession>
<reference key="1">
    <citation type="journal article" date="2008" name="Nat. Biotechnol.">
        <title>Genome sequencing and analysis of the filamentous fungus Penicillium chrysogenum.</title>
        <authorList>
            <person name="van den Berg M.A."/>
            <person name="Albang R."/>
            <person name="Albermann K."/>
            <person name="Badger J.H."/>
            <person name="Daran J.-M."/>
            <person name="Driessen A.J.M."/>
            <person name="Garcia-Estrada C."/>
            <person name="Fedorova N.D."/>
            <person name="Harris D.M."/>
            <person name="Heijne W.H.M."/>
            <person name="Joardar V.S."/>
            <person name="Kiel J.A.K.W."/>
            <person name="Kovalchuk A."/>
            <person name="Martin J.F."/>
            <person name="Nierman W.C."/>
            <person name="Nijland J.G."/>
            <person name="Pronk J.T."/>
            <person name="Roubos J.A."/>
            <person name="van der Klei I.J."/>
            <person name="van Peij N.N.M.E."/>
            <person name="Veenhuis M."/>
            <person name="von Doehren H."/>
            <person name="Wagner C."/>
            <person name="Wortman J.R."/>
            <person name="Bovenberg R.A.L."/>
        </authorList>
    </citation>
    <scope>NUCLEOTIDE SEQUENCE [LARGE SCALE GENOMIC DNA]</scope>
    <source>
        <strain>ATCC 28089 / DSM 1075 / NRRL 1951 / Wisconsin 54-1255</strain>
    </source>
</reference>